<sequence>MESTLGSDLARLVRVWRALIDHRLKPLELTQTHWVTLYNINRLPPEQSQIQLAKAIGIEQPSLVRTLDQLEEKGLITRHTCANDRRAKRIKLTEQSSPIIEQVDGVICSTRKEILGGISSDEIAVLSGLIDKLEKNIIQLQTK</sequence>
<feature type="chain" id="PRO_1000070358" description="Transcriptional regulator SlyA">
    <location>
        <begin position="1"/>
        <end position="143"/>
    </location>
</feature>
<feature type="domain" description="HTH marR-type" evidence="1">
    <location>
        <begin position="2"/>
        <end position="135"/>
    </location>
</feature>
<feature type="DNA-binding region" description="H-T-H motif" evidence="1">
    <location>
        <begin position="49"/>
        <end position="72"/>
    </location>
</feature>
<evidence type="ECO:0000255" key="1">
    <source>
        <dbReference type="HAMAP-Rule" id="MF_01819"/>
    </source>
</evidence>
<reference key="1">
    <citation type="journal article" date="2007" name="PLoS Genet.">
        <title>The complete genome sequence of Yersinia pseudotuberculosis IP31758, the causative agent of Far East scarlet-like fever.</title>
        <authorList>
            <person name="Eppinger M."/>
            <person name="Rosovitz M.J."/>
            <person name="Fricke W.F."/>
            <person name="Rasko D.A."/>
            <person name="Kokorina G."/>
            <person name="Fayolle C."/>
            <person name="Lindler L.E."/>
            <person name="Carniel E."/>
            <person name="Ravel J."/>
        </authorList>
    </citation>
    <scope>NUCLEOTIDE SEQUENCE [LARGE SCALE GENOMIC DNA]</scope>
    <source>
        <strain>IP 31758</strain>
    </source>
</reference>
<dbReference type="EMBL" id="CP000720">
    <property type="protein sequence ID" value="ABS48399.1"/>
    <property type="molecule type" value="Genomic_DNA"/>
</dbReference>
<dbReference type="SMR" id="A7FHL4"/>
<dbReference type="KEGG" id="ypi:YpsIP31758_1767"/>
<dbReference type="HOGENOM" id="CLU_083287_18_2_6"/>
<dbReference type="Proteomes" id="UP000002412">
    <property type="component" value="Chromosome"/>
</dbReference>
<dbReference type="GO" id="GO:0003677">
    <property type="term" value="F:DNA binding"/>
    <property type="evidence" value="ECO:0007669"/>
    <property type="project" value="UniProtKB-UniRule"/>
</dbReference>
<dbReference type="GO" id="GO:0003700">
    <property type="term" value="F:DNA-binding transcription factor activity"/>
    <property type="evidence" value="ECO:0007669"/>
    <property type="project" value="UniProtKB-UniRule"/>
</dbReference>
<dbReference type="GO" id="GO:0006950">
    <property type="term" value="P:response to stress"/>
    <property type="evidence" value="ECO:0007669"/>
    <property type="project" value="TreeGrafter"/>
</dbReference>
<dbReference type="FunFam" id="1.10.10.10:FF:000261">
    <property type="entry name" value="Transcriptional regulator SlyA"/>
    <property type="match status" value="1"/>
</dbReference>
<dbReference type="Gene3D" id="1.10.10.10">
    <property type="entry name" value="Winged helix-like DNA-binding domain superfamily/Winged helix DNA-binding domain"/>
    <property type="match status" value="1"/>
</dbReference>
<dbReference type="HAMAP" id="MF_01819">
    <property type="entry name" value="HTH_type_SlyA"/>
    <property type="match status" value="1"/>
</dbReference>
<dbReference type="InterPro" id="IPR000835">
    <property type="entry name" value="HTH_MarR-typ"/>
</dbReference>
<dbReference type="InterPro" id="IPR039422">
    <property type="entry name" value="MarR/SlyA-like"/>
</dbReference>
<dbReference type="InterPro" id="IPR023187">
    <property type="entry name" value="Tscrpt_reg_MarR-type_CS"/>
</dbReference>
<dbReference type="InterPro" id="IPR023071">
    <property type="entry name" value="Tscrpt_reg_SlyA"/>
</dbReference>
<dbReference type="InterPro" id="IPR036388">
    <property type="entry name" value="WH-like_DNA-bd_sf"/>
</dbReference>
<dbReference type="InterPro" id="IPR036390">
    <property type="entry name" value="WH_DNA-bd_sf"/>
</dbReference>
<dbReference type="NCBIfam" id="NF002926">
    <property type="entry name" value="PRK03573.1"/>
    <property type="match status" value="1"/>
</dbReference>
<dbReference type="PANTHER" id="PTHR33164:SF64">
    <property type="entry name" value="TRANSCRIPTIONAL REGULATOR SLYA"/>
    <property type="match status" value="1"/>
</dbReference>
<dbReference type="PANTHER" id="PTHR33164">
    <property type="entry name" value="TRANSCRIPTIONAL REGULATOR, MARR FAMILY"/>
    <property type="match status" value="1"/>
</dbReference>
<dbReference type="Pfam" id="PF01047">
    <property type="entry name" value="MarR"/>
    <property type="match status" value="1"/>
</dbReference>
<dbReference type="PRINTS" id="PR00598">
    <property type="entry name" value="HTHMARR"/>
</dbReference>
<dbReference type="SMART" id="SM00347">
    <property type="entry name" value="HTH_MARR"/>
    <property type="match status" value="1"/>
</dbReference>
<dbReference type="SUPFAM" id="SSF46785">
    <property type="entry name" value="Winged helix' DNA-binding domain"/>
    <property type="match status" value="1"/>
</dbReference>
<dbReference type="PROSITE" id="PS01117">
    <property type="entry name" value="HTH_MARR_1"/>
    <property type="match status" value="1"/>
</dbReference>
<dbReference type="PROSITE" id="PS50995">
    <property type="entry name" value="HTH_MARR_2"/>
    <property type="match status" value="1"/>
</dbReference>
<protein>
    <recommendedName>
        <fullName evidence="1">Transcriptional regulator SlyA</fullName>
    </recommendedName>
</protein>
<comment type="function">
    <text evidence="1">Transcription regulator that can specifically activate or repress expression of target genes.</text>
</comment>
<comment type="subunit">
    <text evidence="1">Homodimer.</text>
</comment>
<comment type="similarity">
    <text evidence="1">Belongs to the SlyA family.</text>
</comment>
<name>SLYA_YERP3</name>
<accession>A7FHL4</accession>
<gene>
    <name evidence="1" type="primary">slyA</name>
    <name type="ordered locus">YpsIP31758_1767</name>
</gene>
<organism>
    <name type="scientific">Yersinia pseudotuberculosis serotype O:1b (strain IP 31758)</name>
    <dbReference type="NCBI Taxonomy" id="349747"/>
    <lineage>
        <taxon>Bacteria</taxon>
        <taxon>Pseudomonadati</taxon>
        <taxon>Pseudomonadota</taxon>
        <taxon>Gammaproteobacteria</taxon>
        <taxon>Enterobacterales</taxon>
        <taxon>Yersiniaceae</taxon>
        <taxon>Yersinia</taxon>
    </lineage>
</organism>
<proteinExistence type="inferred from homology"/>
<keyword id="KW-0010">Activator</keyword>
<keyword id="KW-0238">DNA-binding</keyword>
<keyword id="KW-0678">Repressor</keyword>
<keyword id="KW-0804">Transcription</keyword>
<keyword id="KW-0805">Transcription regulation</keyword>